<evidence type="ECO:0000250" key="1"/>
<evidence type="ECO:0000255" key="2"/>
<evidence type="ECO:0000255" key="3">
    <source>
        <dbReference type="PROSITE-ProRule" id="PRU10040"/>
    </source>
</evidence>
<evidence type="ECO:0000305" key="4"/>
<gene>
    <name type="primary">PME24</name>
    <name type="synonym">ARATH24</name>
    <name type="ordered locus">At3g10710</name>
    <name type="ORF">T7M13.21</name>
</gene>
<name>PME24_ARATH</name>
<sequence>MSSPYGKVDEREHVRLEARRKTRKNIAIIAVSLVILAGIVIGAVFGTMAHKKSPETVETNNNGDSISVSVKAVCDVTLHKEKCFETLGSAPNASSLNPEELFRYAVKITIAEVSKAINAFSSSLGDEKNNITMNACAELLDLTIDNLNNTLTSSSNGDVTVPELVDDLRTWLSSAGTYQRTCVETLAPDMRPFGESHLKNSTELTSNALAIITWLGKIADSFKLRRRLLTTADVEVDFHAGRRLLQSTDLRKVADIVVAKDGSGKYRTIKRALQDVPEKSEKRTIIYVKKGVYFENVKVEKKMWNVIVVGDGESKSIVSGRLNVIDGTPTFKTATFAVFGKGFMARDMGFINTAGPSKHQAVALMVSADLTAFYRCTMNAYQDTLYVHAQRQFYRECTIIGTVDFIFGNSASVLQSCRILPRRPMKGQQNTITAQGRTDPNMNTGISIHRCNISPLGDLTDVMTFLGRPWKNFSTTVIMDSYLHGFIDRKGWLPWTGDSAPDTIFYGEYKNTGPGASTKNRVKWKGLRFLSTKEANRFTVKPFIDGGRWLPATKVPFRSGL</sequence>
<dbReference type="EC" id="3.1.1.11"/>
<dbReference type="EMBL" id="AC011708">
    <property type="protein sequence ID" value="AAF19578.1"/>
    <property type="molecule type" value="Genomic_DNA"/>
</dbReference>
<dbReference type="EMBL" id="CP002686">
    <property type="protein sequence ID" value="AEE74945.1"/>
    <property type="molecule type" value="Genomic_DNA"/>
</dbReference>
<dbReference type="SMR" id="Q9SG77"/>
<dbReference type="FunCoup" id="Q9SG77">
    <property type="interactions" value="81"/>
</dbReference>
<dbReference type="STRING" id="3702.Q9SG77"/>
<dbReference type="GlyCosmos" id="Q9SG77">
    <property type="glycosylation" value="5 sites, No reported glycans"/>
</dbReference>
<dbReference type="GlyGen" id="Q9SG77">
    <property type="glycosylation" value="5 sites"/>
</dbReference>
<dbReference type="iPTMnet" id="Q9SG77"/>
<dbReference type="PaxDb" id="3702-AT3G10710.1"/>
<dbReference type="ProteomicsDB" id="234778"/>
<dbReference type="EnsemblPlants" id="AT3G10710.1">
    <property type="protein sequence ID" value="AT3G10710.1"/>
    <property type="gene ID" value="AT3G10710"/>
</dbReference>
<dbReference type="Gramene" id="AT3G10710.1">
    <property type="protein sequence ID" value="AT3G10710.1"/>
    <property type="gene ID" value="AT3G10710"/>
</dbReference>
<dbReference type="KEGG" id="ath:AT3G10710"/>
<dbReference type="Araport" id="AT3G10710"/>
<dbReference type="TAIR" id="AT3G10710">
    <property type="gene designation" value="RHS12"/>
</dbReference>
<dbReference type="eggNOG" id="ENOG502QVDS">
    <property type="taxonomic scope" value="Eukaryota"/>
</dbReference>
<dbReference type="HOGENOM" id="CLU_012243_9_2_1"/>
<dbReference type="InParanoid" id="Q9SG77"/>
<dbReference type="OMA" id="HRCNISP"/>
<dbReference type="PhylomeDB" id="Q9SG77"/>
<dbReference type="BioCyc" id="ARA:AT3G10710-MONOMER"/>
<dbReference type="UniPathway" id="UPA00545">
    <property type="reaction ID" value="UER00823"/>
</dbReference>
<dbReference type="PRO" id="PR:Q9SG77"/>
<dbReference type="Proteomes" id="UP000006548">
    <property type="component" value="Chromosome 3"/>
</dbReference>
<dbReference type="ExpressionAtlas" id="Q9SG77">
    <property type="expression patterns" value="baseline and differential"/>
</dbReference>
<dbReference type="GO" id="GO:0016020">
    <property type="term" value="C:membrane"/>
    <property type="evidence" value="ECO:0007669"/>
    <property type="project" value="UniProtKB-SubCell"/>
</dbReference>
<dbReference type="GO" id="GO:0004857">
    <property type="term" value="F:enzyme inhibitor activity"/>
    <property type="evidence" value="ECO:0007669"/>
    <property type="project" value="InterPro"/>
</dbReference>
<dbReference type="GO" id="GO:0030599">
    <property type="term" value="F:pectinesterase activity"/>
    <property type="evidence" value="ECO:0007669"/>
    <property type="project" value="UniProtKB-EC"/>
</dbReference>
<dbReference type="GO" id="GO:0042545">
    <property type="term" value="P:cell wall modification"/>
    <property type="evidence" value="ECO:0007669"/>
    <property type="project" value="InterPro"/>
</dbReference>
<dbReference type="GO" id="GO:0045490">
    <property type="term" value="P:pectin catabolic process"/>
    <property type="evidence" value="ECO:0007669"/>
    <property type="project" value="UniProtKB-UniPathway"/>
</dbReference>
<dbReference type="CDD" id="cd15798">
    <property type="entry name" value="PMEI-like_3"/>
    <property type="match status" value="1"/>
</dbReference>
<dbReference type="FunFam" id="1.20.140.40:FF:000001">
    <property type="entry name" value="Pectinesterase"/>
    <property type="match status" value="1"/>
</dbReference>
<dbReference type="FunFam" id="2.160.20.10:FF:000001">
    <property type="entry name" value="Pectinesterase"/>
    <property type="match status" value="1"/>
</dbReference>
<dbReference type="Gene3D" id="1.20.140.40">
    <property type="entry name" value="Invertase/pectin methylesterase inhibitor family protein"/>
    <property type="match status" value="1"/>
</dbReference>
<dbReference type="Gene3D" id="2.160.20.10">
    <property type="entry name" value="Single-stranded right-handed beta-helix, Pectin lyase-like"/>
    <property type="match status" value="1"/>
</dbReference>
<dbReference type="InterPro" id="IPR035513">
    <property type="entry name" value="Invertase/methylesterase_inhib"/>
</dbReference>
<dbReference type="InterPro" id="IPR012334">
    <property type="entry name" value="Pectin_lyas_fold"/>
</dbReference>
<dbReference type="InterPro" id="IPR011050">
    <property type="entry name" value="Pectin_lyase_fold/virulence"/>
</dbReference>
<dbReference type="InterPro" id="IPR033131">
    <property type="entry name" value="Pectinesterase_Asp_AS"/>
</dbReference>
<dbReference type="InterPro" id="IPR000070">
    <property type="entry name" value="Pectinesterase_cat"/>
</dbReference>
<dbReference type="InterPro" id="IPR006501">
    <property type="entry name" value="Pectinesterase_inhib_dom"/>
</dbReference>
<dbReference type="NCBIfam" id="TIGR01614">
    <property type="entry name" value="PME_inhib"/>
    <property type="match status" value="1"/>
</dbReference>
<dbReference type="PANTHER" id="PTHR31707">
    <property type="entry name" value="PECTINESTERASE"/>
    <property type="match status" value="1"/>
</dbReference>
<dbReference type="Pfam" id="PF01095">
    <property type="entry name" value="Pectinesterase"/>
    <property type="match status" value="1"/>
</dbReference>
<dbReference type="Pfam" id="PF04043">
    <property type="entry name" value="PMEI"/>
    <property type="match status" value="1"/>
</dbReference>
<dbReference type="SMART" id="SM00856">
    <property type="entry name" value="PMEI"/>
    <property type="match status" value="1"/>
</dbReference>
<dbReference type="SUPFAM" id="SSF51126">
    <property type="entry name" value="Pectin lyase-like"/>
    <property type="match status" value="1"/>
</dbReference>
<dbReference type="SUPFAM" id="SSF101148">
    <property type="entry name" value="Plant invertase/pectin methylesterase inhibitor"/>
    <property type="match status" value="1"/>
</dbReference>
<dbReference type="PROSITE" id="PS00503">
    <property type="entry name" value="PECTINESTERASE_2"/>
    <property type="match status" value="1"/>
</dbReference>
<organism>
    <name type="scientific">Arabidopsis thaliana</name>
    <name type="common">Mouse-ear cress</name>
    <dbReference type="NCBI Taxonomy" id="3702"/>
    <lineage>
        <taxon>Eukaryota</taxon>
        <taxon>Viridiplantae</taxon>
        <taxon>Streptophyta</taxon>
        <taxon>Embryophyta</taxon>
        <taxon>Tracheophyta</taxon>
        <taxon>Spermatophyta</taxon>
        <taxon>Magnoliopsida</taxon>
        <taxon>eudicotyledons</taxon>
        <taxon>Gunneridae</taxon>
        <taxon>Pentapetalae</taxon>
        <taxon>rosids</taxon>
        <taxon>malvids</taxon>
        <taxon>Brassicales</taxon>
        <taxon>Brassicaceae</taxon>
        <taxon>Camelineae</taxon>
        <taxon>Arabidopsis</taxon>
    </lineage>
</organism>
<keyword id="KW-0063">Aspartyl esterase</keyword>
<keyword id="KW-1015">Disulfide bond</keyword>
<keyword id="KW-0325">Glycoprotein</keyword>
<keyword id="KW-0378">Hydrolase</keyword>
<keyword id="KW-0472">Membrane</keyword>
<keyword id="KW-1185">Reference proteome</keyword>
<keyword id="KW-0812">Transmembrane</keyword>
<keyword id="KW-1133">Transmembrane helix</keyword>
<comment type="function">
    <text evidence="1">Acts in the modification of cell walls via demethylesterification of cell wall pectin.</text>
</comment>
<comment type="catalytic activity">
    <reaction>
        <text>[(1-&gt;4)-alpha-D-galacturonosyl methyl ester](n) + n H2O = [(1-&gt;4)-alpha-D-galacturonosyl](n) + n methanol + n H(+)</text>
        <dbReference type="Rhea" id="RHEA:22380"/>
        <dbReference type="Rhea" id="RHEA-COMP:14570"/>
        <dbReference type="Rhea" id="RHEA-COMP:14573"/>
        <dbReference type="ChEBI" id="CHEBI:15377"/>
        <dbReference type="ChEBI" id="CHEBI:15378"/>
        <dbReference type="ChEBI" id="CHEBI:17790"/>
        <dbReference type="ChEBI" id="CHEBI:140522"/>
        <dbReference type="ChEBI" id="CHEBI:140523"/>
        <dbReference type="EC" id="3.1.1.11"/>
    </reaction>
</comment>
<comment type="pathway">
    <text>Glycan metabolism; pectin degradation; 2-dehydro-3-deoxy-D-gluconate from pectin: step 1/5.</text>
</comment>
<comment type="subcellular location">
    <subcellularLocation>
        <location evidence="4">Membrane</location>
        <topology evidence="4">Single-pass membrane protein</topology>
    </subcellularLocation>
</comment>
<comment type="miscellaneous">
    <text>The PMEI region may act as an autoinhibitory domain and prevent untimely PME activity during transport.</text>
</comment>
<comment type="similarity">
    <text evidence="4">In the N-terminal section; belongs to the PMEI family.</text>
</comment>
<comment type="similarity">
    <text evidence="4">In the C-terminal section; belongs to the pectinesterase family.</text>
</comment>
<proteinExistence type="inferred from homology"/>
<protein>
    <recommendedName>
        <fullName>Putative pectinesterase/pectinesterase inhibitor 24</fullName>
    </recommendedName>
    <domain>
        <recommendedName>
            <fullName>Pectinesterase inhibitor 24</fullName>
        </recommendedName>
        <alternativeName>
            <fullName>Pectin methylesterase inhibitor 24</fullName>
        </alternativeName>
    </domain>
    <domain>
        <recommendedName>
            <fullName>Pectinesterase 24</fullName>
            <shortName>PE 24</shortName>
            <ecNumber>3.1.1.11</ecNumber>
        </recommendedName>
        <alternativeName>
            <fullName>Pectin methylesterase 24</fullName>
            <shortName>AtPME24</shortName>
        </alternativeName>
    </domain>
</protein>
<accession>Q9SG77</accession>
<feature type="chain" id="PRO_0000370187" description="Putative pectinesterase/pectinesterase inhibitor 24">
    <location>
        <begin position="1"/>
        <end position="561"/>
    </location>
</feature>
<feature type="transmembrane region" description="Helical" evidence="2">
    <location>
        <begin position="26"/>
        <end position="46"/>
    </location>
</feature>
<feature type="region of interest" description="Pectinesterase inhibitor 24">
    <location>
        <begin position="64"/>
        <end position="211"/>
    </location>
</feature>
<feature type="region of interest" description="Pectinesterase 24">
    <location>
        <begin position="255"/>
        <end position="548"/>
    </location>
</feature>
<feature type="active site" description="Proton donor; for pectinesterase activity" evidence="3">
    <location>
        <position position="383"/>
    </location>
</feature>
<feature type="active site" description="Nucleophile; for pectinesterase activity" evidence="3">
    <location>
        <position position="404"/>
    </location>
</feature>
<feature type="binding site" evidence="1">
    <location>
        <position position="330"/>
    </location>
    <ligand>
        <name>substrate</name>
        <note>for pectinesterase activity</note>
    </ligand>
</feature>
<feature type="binding site" evidence="1">
    <location>
        <position position="360"/>
    </location>
    <ligand>
        <name>substrate</name>
        <note>for pectinesterase activity</note>
    </ligand>
</feature>
<feature type="binding site" evidence="1">
    <location>
        <position position="468"/>
    </location>
    <ligand>
        <name>substrate</name>
        <note>for pectinesterase activity</note>
    </ligand>
</feature>
<feature type="binding site" evidence="1">
    <location>
        <position position="470"/>
    </location>
    <ligand>
        <name>substrate</name>
        <note>for pectinesterase activity</note>
    </ligand>
</feature>
<feature type="site" description="Transition state stabilizer" evidence="1">
    <location>
        <position position="382"/>
    </location>
</feature>
<feature type="glycosylation site" description="N-linked (GlcNAc...) asparagine" evidence="2">
    <location>
        <position position="92"/>
    </location>
</feature>
<feature type="glycosylation site" description="N-linked (GlcNAc...) asparagine" evidence="2">
    <location>
        <position position="130"/>
    </location>
</feature>
<feature type="glycosylation site" description="N-linked (GlcNAc...) asparagine" evidence="2">
    <location>
        <position position="148"/>
    </location>
</feature>
<feature type="glycosylation site" description="N-linked (GlcNAc...) asparagine" evidence="2">
    <location>
        <position position="200"/>
    </location>
</feature>
<feature type="glycosylation site" description="N-linked (GlcNAc...) asparagine" evidence="2">
    <location>
        <position position="472"/>
    </location>
</feature>
<feature type="disulfide bond" evidence="1">
    <location>
        <begin position="397"/>
        <end position="417"/>
    </location>
</feature>
<reference key="1">
    <citation type="journal article" date="2000" name="Nature">
        <title>Sequence and analysis of chromosome 3 of the plant Arabidopsis thaliana.</title>
        <authorList>
            <person name="Salanoubat M."/>
            <person name="Lemcke K."/>
            <person name="Rieger M."/>
            <person name="Ansorge W."/>
            <person name="Unseld M."/>
            <person name="Fartmann B."/>
            <person name="Valle G."/>
            <person name="Bloecker H."/>
            <person name="Perez-Alonso M."/>
            <person name="Obermaier B."/>
            <person name="Delseny M."/>
            <person name="Boutry M."/>
            <person name="Grivell L.A."/>
            <person name="Mache R."/>
            <person name="Puigdomenech P."/>
            <person name="De Simone V."/>
            <person name="Choisne N."/>
            <person name="Artiguenave F."/>
            <person name="Robert C."/>
            <person name="Brottier P."/>
            <person name="Wincker P."/>
            <person name="Cattolico L."/>
            <person name="Weissenbach J."/>
            <person name="Saurin W."/>
            <person name="Quetier F."/>
            <person name="Schaefer M."/>
            <person name="Mueller-Auer S."/>
            <person name="Gabel C."/>
            <person name="Fuchs M."/>
            <person name="Benes V."/>
            <person name="Wurmbach E."/>
            <person name="Drzonek H."/>
            <person name="Erfle H."/>
            <person name="Jordan N."/>
            <person name="Bangert S."/>
            <person name="Wiedelmann R."/>
            <person name="Kranz H."/>
            <person name="Voss H."/>
            <person name="Holland R."/>
            <person name="Brandt P."/>
            <person name="Nyakatura G."/>
            <person name="Vezzi A."/>
            <person name="D'Angelo M."/>
            <person name="Pallavicini A."/>
            <person name="Toppo S."/>
            <person name="Simionati B."/>
            <person name="Conrad A."/>
            <person name="Hornischer K."/>
            <person name="Kauer G."/>
            <person name="Loehnert T.-H."/>
            <person name="Nordsiek G."/>
            <person name="Reichelt J."/>
            <person name="Scharfe M."/>
            <person name="Schoen O."/>
            <person name="Bargues M."/>
            <person name="Terol J."/>
            <person name="Climent J."/>
            <person name="Navarro P."/>
            <person name="Collado C."/>
            <person name="Perez-Perez A."/>
            <person name="Ottenwaelder B."/>
            <person name="Duchemin D."/>
            <person name="Cooke R."/>
            <person name="Laudie M."/>
            <person name="Berger-Llauro C."/>
            <person name="Purnelle B."/>
            <person name="Masuy D."/>
            <person name="de Haan M."/>
            <person name="Maarse A.C."/>
            <person name="Alcaraz J.-P."/>
            <person name="Cottet A."/>
            <person name="Casacuberta E."/>
            <person name="Monfort A."/>
            <person name="Argiriou A."/>
            <person name="Flores M."/>
            <person name="Liguori R."/>
            <person name="Vitale D."/>
            <person name="Mannhaupt G."/>
            <person name="Haase D."/>
            <person name="Schoof H."/>
            <person name="Rudd S."/>
            <person name="Zaccaria P."/>
            <person name="Mewes H.-W."/>
            <person name="Mayer K.F.X."/>
            <person name="Kaul S."/>
            <person name="Town C.D."/>
            <person name="Koo H.L."/>
            <person name="Tallon L.J."/>
            <person name="Jenkins J."/>
            <person name="Rooney T."/>
            <person name="Rizzo M."/>
            <person name="Walts A."/>
            <person name="Utterback T."/>
            <person name="Fujii C.Y."/>
            <person name="Shea T.P."/>
            <person name="Creasy T.H."/>
            <person name="Haas B."/>
            <person name="Maiti R."/>
            <person name="Wu D."/>
            <person name="Peterson J."/>
            <person name="Van Aken S."/>
            <person name="Pai G."/>
            <person name="Militscher J."/>
            <person name="Sellers P."/>
            <person name="Gill J.E."/>
            <person name="Feldblyum T.V."/>
            <person name="Preuss D."/>
            <person name="Lin X."/>
            <person name="Nierman W.C."/>
            <person name="Salzberg S.L."/>
            <person name="White O."/>
            <person name="Venter J.C."/>
            <person name="Fraser C.M."/>
            <person name="Kaneko T."/>
            <person name="Nakamura Y."/>
            <person name="Sato S."/>
            <person name="Kato T."/>
            <person name="Asamizu E."/>
            <person name="Sasamoto S."/>
            <person name="Kimura T."/>
            <person name="Idesawa K."/>
            <person name="Kawashima K."/>
            <person name="Kishida Y."/>
            <person name="Kiyokawa C."/>
            <person name="Kohara M."/>
            <person name="Matsumoto M."/>
            <person name="Matsuno A."/>
            <person name="Muraki A."/>
            <person name="Nakayama S."/>
            <person name="Nakazaki N."/>
            <person name="Shinpo S."/>
            <person name="Takeuchi C."/>
            <person name="Wada T."/>
            <person name="Watanabe A."/>
            <person name="Yamada M."/>
            <person name="Yasuda M."/>
            <person name="Tabata S."/>
        </authorList>
    </citation>
    <scope>NUCLEOTIDE SEQUENCE [LARGE SCALE GENOMIC DNA]</scope>
    <source>
        <strain>cv. Columbia</strain>
    </source>
</reference>
<reference key="2">
    <citation type="journal article" date="2017" name="Plant J.">
        <title>Araport11: a complete reannotation of the Arabidopsis thaliana reference genome.</title>
        <authorList>
            <person name="Cheng C.Y."/>
            <person name="Krishnakumar V."/>
            <person name="Chan A.P."/>
            <person name="Thibaud-Nissen F."/>
            <person name="Schobel S."/>
            <person name="Town C.D."/>
        </authorList>
    </citation>
    <scope>GENOME REANNOTATION</scope>
    <source>
        <strain>cv. Columbia</strain>
    </source>
</reference>
<reference key="3">
    <citation type="journal article" date="2004" name="Carbohydr. Res.">
        <title>Pectin methylesterases: sequence-structural features and phylogenetic relationships.</title>
        <authorList>
            <person name="Markovic O."/>
            <person name="Janecek S."/>
        </authorList>
    </citation>
    <scope>GENE FAMILY</scope>
    <scope>NOMENCLATURE</scope>
</reference>